<proteinExistence type="inferred from homology"/>
<reference key="1">
    <citation type="journal article" date="1991" name="J. Mol. Evol.">
        <title>The complete nucleotide sequence of the mitochondrial DNA of the fin whale, Balaenoptera physalus.</title>
        <authorList>
            <person name="Arnason U."/>
            <person name="Gullberg A."/>
            <person name="Widegren B."/>
        </authorList>
    </citation>
    <scope>NUCLEOTIDE SEQUENCE [GENOMIC DNA]</scope>
    <source>
        <strain>Isolate No. 27 / Anno 1987</strain>
        <tissue>Liver</tissue>
    </source>
</reference>
<sequence>MPQLDTSMWLLTILSMLLTLFVLFQLKISKHSYSPNPKLAHTKTQKQQAPWNTTWTKIYLPLL</sequence>
<keyword id="KW-0007">Acetylation</keyword>
<keyword id="KW-0066">ATP synthesis</keyword>
<keyword id="KW-0138">CF(0)</keyword>
<keyword id="KW-0375">Hydrogen ion transport</keyword>
<keyword id="KW-0406">Ion transport</keyword>
<keyword id="KW-0472">Membrane</keyword>
<keyword id="KW-0496">Mitochondrion</keyword>
<keyword id="KW-0812">Transmembrane</keyword>
<keyword id="KW-1133">Transmembrane helix</keyword>
<keyword id="KW-0813">Transport</keyword>
<name>ATP8_BALPH</name>
<organism>
    <name type="scientific">Balaenoptera physalus</name>
    <name type="common">Fin whale</name>
    <name type="synonym">Balaena physalus</name>
    <dbReference type="NCBI Taxonomy" id="9770"/>
    <lineage>
        <taxon>Eukaryota</taxon>
        <taxon>Metazoa</taxon>
        <taxon>Chordata</taxon>
        <taxon>Craniata</taxon>
        <taxon>Vertebrata</taxon>
        <taxon>Euteleostomi</taxon>
        <taxon>Mammalia</taxon>
        <taxon>Eutheria</taxon>
        <taxon>Laurasiatheria</taxon>
        <taxon>Artiodactyla</taxon>
        <taxon>Whippomorpha</taxon>
        <taxon>Cetacea</taxon>
        <taxon>Mysticeti</taxon>
        <taxon>Balaenopteridae</taxon>
        <taxon>Balaenoptera</taxon>
    </lineage>
</organism>
<gene>
    <name evidence="1" type="primary">MT-ATP8</name>
    <name type="synonym">ATP8</name>
    <name type="synonym">ATPASE8</name>
    <name type="synonym">MTATP8</name>
</gene>
<dbReference type="EMBL" id="X61145">
    <property type="protein sequence ID" value="CAA43441.1"/>
    <property type="molecule type" value="Genomic_DNA"/>
</dbReference>
<dbReference type="PIR" id="E58850">
    <property type="entry name" value="E58850"/>
</dbReference>
<dbReference type="RefSeq" id="NP_006893.1">
    <property type="nucleotide sequence ID" value="NC_001321.1"/>
</dbReference>
<dbReference type="SMR" id="P24947"/>
<dbReference type="GeneID" id="807611"/>
<dbReference type="CTD" id="4509"/>
<dbReference type="GO" id="GO:0031966">
    <property type="term" value="C:mitochondrial membrane"/>
    <property type="evidence" value="ECO:0007669"/>
    <property type="project" value="UniProtKB-SubCell"/>
</dbReference>
<dbReference type="GO" id="GO:0045259">
    <property type="term" value="C:proton-transporting ATP synthase complex"/>
    <property type="evidence" value="ECO:0000250"/>
    <property type="project" value="UniProtKB"/>
</dbReference>
<dbReference type="GO" id="GO:0015078">
    <property type="term" value="F:proton transmembrane transporter activity"/>
    <property type="evidence" value="ECO:0007669"/>
    <property type="project" value="InterPro"/>
</dbReference>
<dbReference type="GO" id="GO:0015986">
    <property type="term" value="P:proton motive force-driven ATP synthesis"/>
    <property type="evidence" value="ECO:0007669"/>
    <property type="project" value="InterPro"/>
</dbReference>
<dbReference type="InterPro" id="IPR039017">
    <property type="entry name" value="ATP8_mammal"/>
</dbReference>
<dbReference type="InterPro" id="IPR001421">
    <property type="entry name" value="ATP8_metazoa"/>
</dbReference>
<dbReference type="PANTHER" id="PTHR13722">
    <property type="entry name" value="ATP SYNTHASE PROTEIN 8"/>
    <property type="match status" value="1"/>
</dbReference>
<dbReference type="PANTHER" id="PTHR13722:SF0">
    <property type="entry name" value="ATP SYNTHASE PROTEIN 8"/>
    <property type="match status" value="1"/>
</dbReference>
<dbReference type="Pfam" id="PF00895">
    <property type="entry name" value="ATP-synt_8"/>
    <property type="match status" value="1"/>
</dbReference>
<accession>P24947</accession>
<feature type="chain" id="PRO_0000195493" description="ATP synthase F(0) complex subunit 8">
    <location>
        <begin position="1"/>
        <end position="63"/>
    </location>
</feature>
<feature type="transmembrane region" description="Helical" evidence="4">
    <location>
        <begin position="8"/>
        <end position="24"/>
    </location>
</feature>
<feature type="modified residue" description="N6-acetyllysine" evidence="2">
    <location>
        <position position="57"/>
    </location>
</feature>
<comment type="function">
    <text evidence="1 3">Subunit 8, of the mitochondrial membrane ATP synthase complex (F(1)F(0) ATP synthase or Complex V) that produces ATP from ADP in the presence of a proton gradient across the membrane which is generated by electron transport complexes of the respiratory chain. ATP synthase complex consist of a soluble F(1) head domain - the catalytic core - and a membrane F(1) domain - the membrane proton channel. These two domains are linked by a central stalk rotating inside the F(1) region and a stationary peripheral stalk. During catalysis, ATP synthesis in the catalytic domain of F(1) is coupled via a rotary mechanism of the central stalk subunits to proton translocation (By similarity). In vivo, can only synthesize ATP although its ATP hydrolase activity can be activated artificially in vitro (By similarity). Part of the complex F(0) domain (By similarity).</text>
</comment>
<comment type="subunit">
    <text evidence="1">Component of the ATP synthase complex composed at least of ATP5F1A/subunit alpha, ATP5F1B/subunit beta, ATP5MC1/subunit c (homooctomer), MT-ATP6/subunit a, MT-ATP8/subunit 8, ATP5ME/subunit e, ATP5MF/subunit f, ATP5MG/subunit g, ATP5MK/subunit k, ATP5MJ/subunit j, ATP5F1C/subunit gamma, ATP5F1D/subunit delta, ATP5F1E/subunit epsilon, ATP5PF/subunit F6, ATP5PB/subunit b, ATP5PD/subunit d, ATP5PO/subunit OSCP. ATP synthase complex consists of a soluble F(1) head domain (subunits alpha(3) and beta(3)) - the catalytic core - and a membrane F(0) domain - the membrane proton channel (subunits c, a, 8, e, f, g, k and j). These two domains are linked by a central stalk (subunits gamma, delta, and epsilon) rotating inside the F1 region and a stationary peripheral stalk (subunits F6, b, d, and OSCP). Interacts with PRICKLE3.</text>
</comment>
<comment type="subcellular location">
    <subcellularLocation>
        <location>Mitochondrion membrane</location>
        <topology>Single-pass membrane protein</topology>
    </subcellularLocation>
</comment>
<comment type="similarity">
    <text evidence="5">Belongs to the ATPase protein 8 family.</text>
</comment>
<evidence type="ECO:0000250" key="1">
    <source>
        <dbReference type="UniProtKB" id="P03928"/>
    </source>
</evidence>
<evidence type="ECO:0000250" key="2">
    <source>
        <dbReference type="UniProtKB" id="P03930"/>
    </source>
</evidence>
<evidence type="ECO:0000250" key="3">
    <source>
        <dbReference type="UniProtKB" id="P19483"/>
    </source>
</evidence>
<evidence type="ECO:0000255" key="4"/>
<evidence type="ECO:0000305" key="5"/>
<geneLocation type="mitochondrion"/>
<protein>
    <recommendedName>
        <fullName evidence="1">ATP synthase F(0) complex subunit 8</fullName>
    </recommendedName>
    <alternativeName>
        <fullName>A6L</fullName>
    </alternativeName>
    <alternativeName>
        <fullName>F-ATPase subunit 8</fullName>
    </alternativeName>
</protein>